<feature type="chain" id="PRO_0000227682" description="Alkyl/aryl-sulfatase BDS1">
    <location>
        <begin position="1"/>
        <end position="646"/>
    </location>
</feature>
<feature type="binding site" evidence="1">
    <location>
        <position position="162"/>
    </location>
    <ligand>
        <name>Zn(2+)</name>
        <dbReference type="ChEBI" id="CHEBI:29105"/>
        <label>1</label>
    </ligand>
</feature>
<feature type="binding site" evidence="1">
    <location>
        <position position="164"/>
    </location>
    <ligand>
        <name>Zn(2+)</name>
        <dbReference type="ChEBI" id="CHEBI:29105"/>
        <label>1</label>
    </ligand>
</feature>
<feature type="binding site" evidence="1">
    <location>
        <position position="166"/>
    </location>
    <ligand>
        <name>Zn(2+)</name>
        <dbReference type="ChEBI" id="CHEBI:29105"/>
        <label>2</label>
    </ligand>
</feature>
<feature type="binding site" evidence="1">
    <location>
        <position position="167"/>
    </location>
    <ligand>
        <name>Zn(2+)</name>
        <dbReference type="ChEBI" id="CHEBI:29105"/>
        <label>2</label>
    </ligand>
</feature>
<feature type="binding site" evidence="1">
    <location>
        <position position="273"/>
    </location>
    <ligand>
        <name>Zn(2+)</name>
        <dbReference type="ChEBI" id="CHEBI:29105"/>
        <label>1</label>
    </ligand>
</feature>
<feature type="binding site" evidence="1">
    <location>
        <position position="292"/>
    </location>
    <ligand>
        <name>Zn(2+)</name>
        <dbReference type="ChEBI" id="CHEBI:29105"/>
        <label>1</label>
    </ligand>
</feature>
<feature type="binding site" evidence="1">
    <location>
        <position position="292"/>
    </location>
    <ligand>
        <name>Zn(2+)</name>
        <dbReference type="ChEBI" id="CHEBI:29105"/>
        <label>2</label>
    </ligand>
</feature>
<feature type="binding site" evidence="1">
    <location>
        <position position="337"/>
    </location>
    <ligand>
        <name>Zn(2+)</name>
        <dbReference type="ChEBI" id="CHEBI:29105"/>
        <label>2</label>
    </ligand>
</feature>
<feature type="modified residue" description="N-acetylmethionine" evidence="6">
    <location>
        <position position="1"/>
    </location>
</feature>
<dbReference type="EC" id="3.1.6.-"/>
<dbReference type="EMBL" id="Z74906">
    <property type="protein sequence ID" value="CAA99186.1"/>
    <property type="molecule type" value="Genomic_DNA"/>
</dbReference>
<dbReference type="EMBL" id="BK006948">
    <property type="protein sequence ID" value="DAA10622.1"/>
    <property type="molecule type" value="Genomic_DNA"/>
</dbReference>
<dbReference type="PIR" id="S66863">
    <property type="entry name" value="S66863"/>
</dbReference>
<dbReference type="RefSeq" id="NP_014478.1">
    <property type="nucleotide sequence ID" value="NM_001183417.1"/>
</dbReference>
<dbReference type="SMR" id="Q08347"/>
<dbReference type="BioGRID" id="34254">
    <property type="interactions" value="15"/>
</dbReference>
<dbReference type="FunCoup" id="Q08347">
    <property type="interactions" value="41"/>
</dbReference>
<dbReference type="STRING" id="4932.YOL164W"/>
<dbReference type="iPTMnet" id="Q08347"/>
<dbReference type="PaxDb" id="4932-YOL164W"/>
<dbReference type="PeptideAtlas" id="Q08347"/>
<dbReference type="EnsemblFungi" id="YOL164W_mRNA">
    <property type="protein sequence ID" value="YOL164W"/>
    <property type="gene ID" value="YOL164W"/>
</dbReference>
<dbReference type="GeneID" id="854000"/>
<dbReference type="KEGG" id="sce:YOL164W"/>
<dbReference type="AGR" id="SGD:S000005524"/>
<dbReference type="SGD" id="S000005524">
    <property type="gene designation" value="BDS1"/>
</dbReference>
<dbReference type="VEuPathDB" id="FungiDB:YOL164W"/>
<dbReference type="eggNOG" id="ENOG502RJJX">
    <property type="taxonomic scope" value="Eukaryota"/>
</dbReference>
<dbReference type="HOGENOM" id="CLU_014655_1_0_1"/>
<dbReference type="InParanoid" id="Q08347"/>
<dbReference type="OMA" id="ENAGWRN"/>
<dbReference type="OrthoDB" id="449487at2759"/>
<dbReference type="BioCyc" id="YEAST:G3O-33551-MONOMER"/>
<dbReference type="BioGRID-ORCS" id="854000">
    <property type="hits" value="1 hit in 10 CRISPR screens"/>
</dbReference>
<dbReference type="PRO" id="PR:Q08347"/>
<dbReference type="Proteomes" id="UP000002311">
    <property type="component" value="Chromosome XV"/>
</dbReference>
<dbReference type="RNAct" id="Q08347">
    <property type="molecule type" value="protein"/>
</dbReference>
<dbReference type="GO" id="GO:0018741">
    <property type="term" value="F:linear primary-alkylsulfatase activity"/>
    <property type="evidence" value="ECO:0000315"/>
    <property type="project" value="SGD"/>
</dbReference>
<dbReference type="GO" id="GO:0046872">
    <property type="term" value="F:metal ion binding"/>
    <property type="evidence" value="ECO:0007669"/>
    <property type="project" value="UniProtKB-KW"/>
</dbReference>
<dbReference type="GO" id="GO:0046983">
    <property type="term" value="F:protein dimerization activity"/>
    <property type="evidence" value="ECO:0007669"/>
    <property type="project" value="InterPro"/>
</dbReference>
<dbReference type="GO" id="GO:0018909">
    <property type="term" value="P:dodecyl sulfate metabolic process"/>
    <property type="evidence" value="ECO:0000315"/>
    <property type="project" value="SGD"/>
</dbReference>
<dbReference type="CDD" id="cd07710">
    <property type="entry name" value="arylsulfatase_Sdsa1-like_MBL-fold"/>
    <property type="match status" value="1"/>
</dbReference>
<dbReference type="FunFam" id="3.60.15.30:FF:000001">
    <property type="entry name" value="Alkyl/aryl-sulfatase BDS1"/>
    <property type="match status" value="1"/>
</dbReference>
<dbReference type="FunFam" id="1.25.40.880:FF:000001">
    <property type="entry name" value="SDS hydrolase SdsA1"/>
    <property type="match status" value="1"/>
</dbReference>
<dbReference type="Gene3D" id="1.25.40.880">
    <property type="entry name" value="Alkyl sulfatase, dimerisation domain"/>
    <property type="match status" value="1"/>
</dbReference>
<dbReference type="Gene3D" id="3.60.15.30">
    <property type="entry name" value="Metallo-beta-lactamase domain"/>
    <property type="match status" value="1"/>
</dbReference>
<dbReference type="Gene3D" id="3.30.1050.10">
    <property type="entry name" value="SCP2 sterol-binding domain"/>
    <property type="match status" value="1"/>
</dbReference>
<dbReference type="InterPro" id="IPR038536">
    <property type="entry name" value="Alkyl/aryl-sulf_dimr_sf"/>
</dbReference>
<dbReference type="InterPro" id="IPR029229">
    <property type="entry name" value="Alkyl_sulf_C"/>
</dbReference>
<dbReference type="InterPro" id="IPR029228">
    <property type="entry name" value="Alkyl_sulf_dimr"/>
</dbReference>
<dbReference type="InterPro" id="IPR052195">
    <property type="entry name" value="Bact_Alkyl/Aryl-Sulfatase"/>
</dbReference>
<dbReference type="InterPro" id="IPR044097">
    <property type="entry name" value="Bds1/SdsA1_MBL-fold"/>
</dbReference>
<dbReference type="InterPro" id="IPR001279">
    <property type="entry name" value="Metallo-B-lactamas"/>
</dbReference>
<dbReference type="InterPro" id="IPR036866">
    <property type="entry name" value="RibonucZ/Hydroxyglut_hydro"/>
</dbReference>
<dbReference type="InterPro" id="IPR036527">
    <property type="entry name" value="SCP2_sterol-bd_dom_sf"/>
</dbReference>
<dbReference type="PANTHER" id="PTHR43223">
    <property type="entry name" value="ALKYL/ARYL-SULFATASE"/>
    <property type="match status" value="1"/>
</dbReference>
<dbReference type="PANTHER" id="PTHR43223:SF1">
    <property type="entry name" value="ALKYL_ARYL-SULFATASE BDS1"/>
    <property type="match status" value="1"/>
</dbReference>
<dbReference type="Pfam" id="PF14864">
    <property type="entry name" value="Alkyl_sulf_C"/>
    <property type="match status" value="1"/>
</dbReference>
<dbReference type="Pfam" id="PF14863">
    <property type="entry name" value="Alkyl_sulf_dimr"/>
    <property type="match status" value="1"/>
</dbReference>
<dbReference type="Pfam" id="PF00753">
    <property type="entry name" value="Lactamase_B"/>
    <property type="match status" value="1"/>
</dbReference>
<dbReference type="SMART" id="SM00849">
    <property type="entry name" value="Lactamase_B"/>
    <property type="match status" value="1"/>
</dbReference>
<dbReference type="SUPFAM" id="SSF56281">
    <property type="entry name" value="Metallo-hydrolase/oxidoreductase"/>
    <property type="match status" value="1"/>
</dbReference>
<dbReference type="SUPFAM" id="SSF55718">
    <property type="entry name" value="SCP-like"/>
    <property type="match status" value="1"/>
</dbReference>
<sequence length="646" mass="72646">MIGAFKRNRGSSQSFAKECQPSTLKANLEVAKELPFSDRRDFEDATQGYIGSLSDEQIIGPDGGVVWCMKSYGFLEPETPANTVNPSLWRQAQLNAIHGLFKITDNVYQVRGLDISNMTIIEGNTSLIIIDTLFTTETAQESLKLYYRHRPQKPVRTVIYTHSHSDHYGGVKGIVKEADVKSGEVQIIAPVGFMESVVAENILAGNAMHRRSQYQFGMLLSPSVKGHVDCGIGKAASHGTVTLIAPTIIIEEPVEERTIDGVDFVFQLAPGSEAPSEMLIYMPQQRVLNMAEDVTHHMHNLYALRGVEVRDGNQWAKYIDAARVAFGSKTDVLIAQHHWPTTGQMRINELLKKQRDMYKFIHDQTLRLLNQGYTSRDIAETLRMPSSLEQEWSTRGYYGTLSHNVKAVYQKYLGWYDANPANLNPLPPVAYAKKAVEYMGGADAVLARAYKDFQKGEFRWVASVVNQLVFADPNNHQARELCADALEQLGYQAEASTWRNAYLVGAMELRQGVPKRRSTGKRNNIAVLNNEMFFDFLAVRLNATKAEGKIIVSNWCFINSNERFVITLENCALTYIQGWQTDADATITLKRTTFEALLANEITMVDFLRSKEVEIEGNRLRIEELLKLFDDFDQSFPVVEPMGGST</sequence>
<accession>Q08347</accession>
<accession>D6W1Q6</accession>
<organism>
    <name type="scientific">Saccharomyces cerevisiae (strain ATCC 204508 / S288c)</name>
    <name type="common">Baker's yeast</name>
    <dbReference type="NCBI Taxonomy" id="559292"/>
    <lineage>
        <taxon>Eukaryota</taxon>
        <taxon>Fungi</taxon>
        <taxon>Dikarya</taxon>
        <taxon>Ascomycota</taxon>
        <taxon>Saccharomycotina</taxon>
        <taxon>Saccharomycetes</taxon>
        <taxon>Saccharomycetales</taxon>
        <taxon>Saccharomycetaceae</taxon>
        <taxon>Saccharomyces</taxon>
    </lineage>
</organism>
<keyword id="KW-0007">Acetylation</keyword>
<keyword id="KW-0378">Hydrolase</keyword>
<keyword id="KW-0479">Metal-binding</keyword>
<keyword id="KW-1185">Reference proteome</keyword>
<keyword id="KW-0862">Zinc</keyword>
<comment type="function">
    <text evidence="3">Alkyl/aryl-sulfatase. Enables the use of SDS and 4-nitrocatechol as sulfur source.</text>
</comment>
<comment type="cofactor">
    <cofactor evidence="1">
        <name>Zn(2+)</name>
        <dbReference type="ChEBI" id="CHEBI:29105"/>
    </cofactor>
    <text evidence="1">Binds 2 Zn(2+) ions per subunit.</text>
</comment>
<comment type="induction">
    <text evidence="2">Expression is increased in sulfur-limited chemostat cultures.</text>
</comment>
<comment type="miscellaneous">
    <text evidence="3">The presence of this bacterial-like protein in S.cerevisiae results probably from a recent horizontal gene transfer event.</text>
</comment>
<comment type="similarity">
    <text evidence="5">Belongs to the metallo-beta-lactamase superfamily. Type III sulfatase family.</text>
</comment>
<proteinExistence type="evidence at protein level"/>
<name>BDS1_YEAST</name>
<gene>
    <name type="primary">BDS1</name>
    <name type="ordered locus">YOL164W</name>
</gene>
<evidence type="ECO:0000250" key="1">
    <source>
        <dbReference type="UniProtKB" id="Q9I5I9"/>
    </source>
</evidence>
<evidence type="ECO:0000269" key="2">
    <source>
    </source>
</evidence>
<evidence type="ECO:0000269" key="3">
    <source>
    </source>
</evidence>
<evidence type="ECO:0000303" key="4">
    <source>
    </source>
</evidence>
<evidence type="ECO:0000305" key="5"/>
<evidence type="ECO:0007744" key="6">
    <source>
    </source>
</evidence>
<protein>
    <recommendedName>
        <fullName evidence="4">Alkyl/aryl-sulfatase BDS1</fullName>
        <ecNumber>3.1.6.-</ecNumber>
    </recommendedName>
    <alternativeName>
        <fullName evidence="4">Bacterially-derived sulfatase 1</fullName>
    </alternativeName>
</protein>
<reference key="1">
    <citation type="journal article" date="1997" name="Nature">
        <title>The nucleotide sequence of Saccharomyces cerevisiae chromosome XV.</title>
        <authorList>
            <person name="Dujon B."/>
            <person name="Albermann K."/>
            <person name="Aldea M."/>
            <person name="Alexandraki D."/>
            <person name="Ansorge W."/>
            <person name="Arino J."/>
            <person name="Benes V."/>
            <person name="Bohn C."/>
            <person name="Bolotin-Fukuhara M."/>
            <person name="Bordonne R."/>
            <person name="Boyer J."/>
            <person name="Camasses A."/>
            <person name="Casamayor A."/>
            <person name="Casas C."/>
            <person name="Cheret G."/>
            <person name="Cziepluch C."/>
            <person name="Daignan-Fornier B."/>
            <person name="Dang V.-D."/>
            <person name="de Haan M."/>
            <person name="Delius H."/>
            <person name="Durand P."/>
            <person name="Fairhead C."/>
            <person name="Feldmann H."/>
            <person name="Gaillon L."/>
            <person name="Galisson F."/>
            <person name="Gamo F.-J."/>
            <person name="Gancedo C."/>
            <person name="Goffeau A."/>
            <person name="Goulding S.E."/>
            <person name="Grivell L.A."/>
            <person name="Habbig B."/>
            <person name="Hand N.J."/>
            <person name="Hani J."/>
            <person name="Hattenhorst U."/>
            <person name="Hebling U."/>
            <person name="Hernando Y."/>
            <person name="Herrero E."/>
            <person name="Heumann K."/>
            <person name="Hiesel R."/>
            <person name="Hilger F."/>
            <person name="Hofmann B."/>
            <person name="Hollenberg C.P."/>
            <person name="Hughes B."/>
            <person name="Jauniaux J.-C."/>
            <person name="Kalogeropoulos A."/>
            <person name="Katsoulou C."/>
            <person name="Kordes E."/>
            <person name="Lafuente M.J."/>
            <person name="Landt O."/>
            <person name="Louis E.J."/>
            <person name="Maarse A.C."/>
            <person name="Madania A."/>
            <person name="Mannhaupt G."/>
            <person name="Marck C."/>
            <person name="Martin R.P."/>
            <person name="Mewes H.-W."/>
            <person name="Michaux G."/>
            <person name="Paces V."/>
            <person name="Parle-McDermott A.G."/>
            <person name="Pearson B.M."/>
            <person name="Perrin A."/>
            <person name="Pettersson B."/>
            <person name="Poch O."/>
            <person name="Pohl T.M."/>
            <person name="Poirey R."/>
            <person name="Portetelle D."/>
            <person name="Pujol A."/>
            <person name="Purnelle B."/>
            <person name="Ramezani Rad M."/>
            <person name="Rechmann S."/>
            <person name="Schwager C."/>
            <person name="Schweizer M."/>
            <person name="Sor F."/>
            <person name="Sterky F."/>
            <person name="Tarassov I.A."/>
            <person name="Teodoru C."/>
            <person name="Tettelin H."/>
            <person name="Thierry A."/>
            <person name="Tobiasch E."/>
            <person name="Tzermia M."/>
            <person name="Uhlen M."/>
            <person name="Unseld M."/>
            <person name="Valens M."/>
            <person name="Vandenbol M."/>
            <person name="Vetter I."/>
            <person name="Vlcek C."/>
            <person name="Voet M."/>
            <person name="Volckaert G."/>
            <person name="Voss H."/>
            <person name="Wambutt R."/>
            <person name="Wedler H."/>
            <person name="Wiemann S."/>
            <person name="Winsor B."/>
            <person name="Wolfe K.H."/>
            <person name="Zollner A."/>
            <person name="Zumstein E."/>
            <person name="Kleine K."/>
        </authorList>
    </citation>
    <scope>NUCLEOTIDE SEQUENCE [LARGE SCALE GENOMIC DNA]</scope>
    <source>
        <strain>ATCC 204508 / S288c</strain>
    </source>
</reference>
<reference key="2">
    <citation type="journal article" date="2014" name="G3 (Bethesda)">
        <title>The reference genome sequence of Saccharomyces cerevisiae: Then and now.</title>
        <authorList>
            <person name="Engel S.R."/>
            <person name="Dietrich F.S."/>
            <person name="Fisk D.G."/>
            <person name="Binkley G."/>
            <person name="Balakrishnan R."/>
            <person name="Costanzo M.C."/>
            <person name="Dwight S.S."/>
            <person name="Hitz B.C."/>
            <person name="Karra K."/>
            <person name="Nash R.S."/>
            <person name="Weng S."/>
            <person name="Wong E.D."/>
            <person name="Lloyd P."/>
            <person name="Skrzypek M.S."/>
            <person name="Miyasato S.R."/>
            <person name="Simison M."/>
            <person name="Cherry J.M."/>
        </authorList>
    </citation>
    <scope>GENOME REANNOTATION</scope>
    <source>
        <strain>ATCC 204508 / S288c</strain>
    </source>
</reference>
<reference key="3">
    <citation type="journal article" date="2003" name="J. Biol. Chem.">
        <title>The genome-wide transcriptional responses of Saccharomyces cerevisiae grown on glucose in aerobic chemostat cultures limited for carbon, nitrogen, phosphorus, or sulfur.</title>
        <authorList>
            <person name="Boer V.M."/>
            <person name="de Winde J.H."/>
            <person name="Pronk J.T."/>
            <person name="Piper M.D.W."/>
        </authorList>
    </citation>
    <scope>INDUCTION</scope>
</reference>
<reference key="4">
    <citation type="journal article" date="2005" name="Eukaryot. Cell">
        <title>Contribution of horizontal gene transfer to the evolution of Saccharomyces cerevisiae.</title>
        <authorList>
            <person name="Hall C.R."/>
            <person name="Brachat S."/>
            <person name="Dietrich F.S."/>
        </authorList>
    </citation>
    <scope>FUNCTION</scope>
</reference>
<reference key="5">
    <citation type="journal article" date="2012" name="Proc. Natl. Acad. Sci. U.S.A.">
        <title>N-terminal acetylome analyses and functional insights of the N-terminal acetyltransferase NatB.</title>
        <authorList>
            <person name="Van Damme P."/>
            <person name="Lasa M."/>
            <person name="Polevoda B."/>
            <person name="Gazquez C."/>
            <person name="Elosegui-Artola A."/>
            <person name="Kim D.S."/>
            <person name="De Juan-Pardo E."/>
            <person name="Demeyer K."/>
            <person name="Hole K."/>
            <person name="Larrea E."/>
            <person name="Timmerman E."/>
            <person name="Prieto J."/>
            <person name="Arnesen T."/>
            <person name="Sherman F."/>
            <person name="Gevaert K."/>
            <person name="Aldabe R."/>
        </authorList>
    </citation>
    <scope>ACETYLATION [LARGE SCALE ANALYSIS] AT MET-1</scope>
    <scope>IDENTIFICATION BY MASS SPECTROMETRY [LARGE SCALE ANALYSIS]</scope>
</reference>